<reference key="1">
    <citation type="journal article" date="1997" name="Nature">
        <title>The complete genome sequence of the Gram-positive bacterium Bacillus subtilis.</title>
        <authorList>
            <person name="Kunst F."/>
            <person name="Ogasawara N."/>
            <person name="Moszer I."/>
            <person name="Albertini A.M."/>
            <person name="Alloni G."/>
            <person name="Azevedo V."/>
            <person name="Bertero M.G."/>
            <person name="Bessieres P."/>
            <person name="Bolotin A."/>
            <person name="Borchert S."/>
            <person name="Borriss R."/>
            <person name="Boursier L."/>
            <person name="Brans A."/>
            <person name="Braun M."/>
            <person name="Brignell S.C."/>
            <person name="Bron S."/>
            <person name="Brouillet S."/>
            <person name="Bruschi C.V."/>
            <person name="Caldwell B."/>
            <person name="Capuano V."/>
            <person name="Carter N.M."/>
            <person name="Choi S.-K."/>
            <person name="Codani J.-J."/>
            <person name="Connerton I.F."/>
            <person name="Cummings N.J."/>
            <person name="Daniel R.A."/>
            <person name="Denizot F."/>
            <person name="Devine K.M."/>
            <person name="Duesterhoeft A."/>
            <person name="Ehrlich S.D."/>
            <person name="Emmerson P.T."/>
            <person name="Entian K.-D."/>
            <person name="Errington J."/>
            <person name="Fabret C."/>
            <person name="Ferrari E."/>
            <person name="Foulger D."/>
            <person name="Fritz C."/>
            <person name="Fujita M."/>
            <person name="Fujita Y."/>
            <person name="Fuma S."/>
            <person name="Galizzi A."/>
            <person name="Galleron N."/>
            <person name="Ghim S.-Y."/>
            <person name="Glaser P."/>
            <person name="Goffeau A."/>
            <person name="Golightly E.J."/>
            <person name="Grandi G."/>
            <person name="Guiseppi G."/>
            <person name="Guy B.J."/>
            <person name="Haga K."/>
            <person name="Haiech J."/>
            <person name="Harwood C.R."/>
            <person name="Henaut A."/>
            <person name="Hilbert H."/>
            <person name="Holsappel S."/>
            <person name="Hosono S."/>
            <person name="Hullo M.-F."/>
            <person name="Itaya M."/>
            <person name="Jones L.-M."/>
            <person name="Joris B."/>
            <person name="Karamata D."/>
            <person name="Kasahara Y."/>
            <person name="Klaerr-Blanchard M."/>
            <person name="Klein C."/>
            <person name="Kobayashi Y."/>
            <person name="Koetter P."/>
            <person name="Koningstein G."/>
            <person name="Krogh S."/>
            <person name="Kumano M."/>
            <person name="Kurita K."/>
            <person name="Lapidus A."/>
            <person name="Lardinois S."/>
            <person name="Lauber J."/>
            <person name="Lazarevic V."/>
            <person name="Lee S.-M."/>
            <person name="Levine A."/>
            <person name="Liu H."/>
            <person name="Masuda S."/>
            <person name="Mauel C."/>
            <person name="Medigue C."/>
            <person name="Medina N."/>
            <person name="Mellado R.P."/>
            <person name="Mizuno M."/>
            <person name="Moestl D."/>
            <person name="Nakai S."/>
            <person name="Noback M."/>
            <person name="Noone D."/>
            <person name="O'Reilly M."/>
            <person name="Ogawa K."/>
            <person name="Ogiwara A."/>
            <person name="Oudega B."/>
            <person name="Park S.-H."/>
            <person name="Parro V."/>
            <person name="Pohl T.M."/>
            <person name="Portetelle D."/>
            <person name="Porwollik S."/>
            <person name="Prescott A.M."/>
            <person name="Presecan E."/>
            <person name="Pujic P."/>
            <person name="Purnelle B."/>
            <person name="Rapoport G."/>
            <person name="Rey M."/>
            <person name="Reynolds S."/>
            <person name="Rieger M."/>
            <person name="Rivolta C."/>
            <person name="Rocha E."/>
            <person name="Roche B."/>
            <person name="Rose M."/>
            <person name="Sadaie Y."/>
            <person name="Sato T."/>
            <person name="Scanlan E."/>
            <person name="Schleich S."/>
            <person name="Schroeter R."/>
            <person name="Scoffone F."/>
            <person name="Sekiguchi J."/>
            <person name="Sekowska A."/>
            <person name="Seror S.J."/>
            <person name="Serror P."/>
            <person name="Shin B.-S."/>
            <person name="Soldo B."/>
            <person name="Sorokin A."/>
            <person name="Tacconi E."/>
            <person name="Takagi T."/>
            <person name="Takahashi H."/>
            <person name="Takemaru K."/>
            <person name="Takeuchi M."/>
            <person name="Tamakoshi A."/>
            <person name="Tanaka T."/>
            <person name="Terpstra P."/>
            <person name="Tognoni A."/>
            <person name="Tosato V."/>
            <person name="Uchiyama S."/>
            <person name="Vandenbol M."/>
            <person name="Vannier F."/>
            <person name="Vassarotti A."/>
            <person name="Viari A."/>
            <person name="Wambutt R."/>
            <person name="Wedler E."/>
            <person name="Wedler H."/>
            <person name="Weitzenegger T."/>
            <person name="Winters P."/>
            <person name="Wipat A."/>
            <person name="Yamamoto H."/>
            <person name="Yamane K."/>
            <person name="Yasumoto K."/>
            <person name="Yata K."/>
            <person name="Yoshida K."/>
            <person name="Yoshikawa H.-F."/>
            <person name="Zumstein E."/>
            <person name="Yoshikawa H."/>
            <person name="Danchin A."/>
        </authorList>
    </citation>
    <scope>NUCLEOTIDE SEQUENCE [LARGE SCALE GENOMIC DNA]</scope>
    <source>
        <strain>168</strain>
    </source>
</reference>
<sequence>MTINLKVKQEKRKGLSINDIQDGYFILRNDDVWIVKMDVTNRNKIHLIDLETFHVKTVSTKNDLKSLFEDWSRIKILSPKQVNLNIGFQWKE</sequence>
<organism>
    <name type="scientific">Bacillus subtilis (strain 168)</name>
    <dbReference type="NCBI Taxonomy" id="224308"/>
    <lineage>
        <taxon>Bacteria</taxon>
        <taxon>Bacillati</taxon>
        <taxon>Bacillota</taxon>
        <taxon>Bacilli</taxon>
        <taxon>Bacillales</taxon>
        <taxon>Bacillaceae</taxon>
        <taxon>Bacillus</taxon>
    </lineage>
</organism>
<keyword id="KW-1185">Reference proteome</keyword>
<gene>
    <name type="primary">yopY</name>
    <name type="ordered locus">BSU20720</name>
</gene>
<feature type="chain" id="PRO_0000372594" description="SPbeta prophage-derived uncharacterized protein YopY">
    <location>
        <begin position="1"/>
        <end position="92"/>
    </location>
</feature>
<proteinExistence type="predicted"/>
<name>YOPY_BACSU</name>
<dbReference type="EMBL" id="AL009126">
    <property type="protein sequence ID" value="CAB13964.1"/>
    <property type="molecule type" value="Genomic_DNA"/>
</dbReference>
<dbReference type="RefSeq" id="NP_389954.1">
    <property type="nucleotide sequence ID" value="NC_000964.3"/>
</dbReference>
<dbReference type="RefSeq" id="WP_004399424.1">
    <property type="nucleotide sequence ID" value="NZ_OZ025638.1"/>
</dbReference>
<dbReference type="FunCoup" id="O34730">
    <property type="interactions" value="20"/>
</dbReference>
<dbReference type="STRING" id="224308.BSU20720"/>
<dbReference type="PaxDb" id="224308-BSU20720"/>
<dbReference type="EnsemblBacteria" id="CAB13964">
    <property type="protein sequence ID" value="CAB13964"/>
    <property type="gene ID" value="BSU_20720"/>
</dbReference>
<dbReference type="GeneID" id="936488"/>
<dbReference type="KEGG" id="bsu:BSU20720"/>
<dbReference type="PATRIC" id="fig|224308.179.peg.2262"/>
<dbReference type="InParanoid" id="O34730"/>
<dbReference type="OrthoDB" id="9860876at2"/>
<dbReference type="BioCyc" id="BSUB:BSU20720-MONOMER"/>
<dbReference type="Proteomes" id="UP000001570">
    <property type="component" value="Chromosome"/>
</dbReference>
<accession>O34730</accession>
<protein>
    <recommendedName>
        <fullName>SPbeta prophage-derived uncharacterized protein YopY</fullName>
    </recommendedName>
</protein>